<accession>Q5REM2</accession>
<proteinExistence type="inferred from homology"/>
<reference key="1">
    <citation type="submission" date="2004-11" db="EMBL/GenBank/DDBJ databases">
        <authorList>
            <consortium name="The German cDNA consortium"/>
        </authorList>
    </citation>
    <scope>NUCLEOTIDE SEQUENCE [LARGE SCALE MRNA]</scope>
    <source>
        <tissue>Heart</tissue>
    </source>
</reference>
<protein>
    <recommendedName>
        <fullName>Leydig cell tumor 10 kDa protein homolog</fullName>
    </recommendedName>
</protein>
<evidence type="ECO:0000250" key="1"/>
<evidence type="ECO:0000256" key="2">
    <source>
        <dbReference type="SAM" id="MobiDB-lite"/>
    </source>
</evidence>
<evidence type="ECO:0000305" key="3"/>
<sequence>MAQGQRKFQARKPAKSKTAATASEKNRGPRKGGRVIAPKKARVVQQQKLKKNLEVGIRKKIEHDVVMKASSSLPKRLALLKAPAKKKGAAAATSSKTPS</sequence>
<organism>
    <name type="scientific">Pongo abelii</name>
    <name type="common">Sumatran orangutan</name>
    <name type="synonym">Pongo pygmaeus abelii</name>
    <dbReference type="NCBI Taxonomy" id="9601"/>
    <lineage>
        <taxon>Eukaryota</taxon>
        <taxon>Metazoa</taxon>
        <taxon>Chordata</taxon>
        <taxon>Craniata</taxon>
        <taxon>Vertebrata</taxon>
        <taxon>Euteleostomi</taxon>
        <taxon>Mammalia</taxon>
        <taxon>Eutheria</taxon>
        <taxon>Euarchontoglires</taxon>
        <taxon>Primates</taxon>
        <taxon>Haplorrhini</taxon>
        <taxon>Catarrhini</taxon>
        <taxon>Hominidae</taxon>
        <taxon>Pongo</taxon>
    </lineage>
</organism>
<keyword id="KW-1185">Reference proteome</keyword>
<name>L10K_PONAB</name>
<dbReference type="EMBL" id="CR857501">
    <property type="protein sequence ID" value="CAH89785.1"/>
    <property type="molecule type" value="mRNA"/>
</dbReference>
<dbReference type="RefSeq" id="NP_001124819.1">
    <property type="nucleotide sequence ID" value="NM_001131347.1"/>
</dbReference>
<dbReference type="SMR" id="Q5REM2"/>
<dbReference type="FunCoup" id="Q5REM2">
    <property type="interactions" value="282"/>
</dbReference>
<dbReference type="STRING" id="9601.ENSPPYP00000011837"/>
<dbReference type="Ensembl" id="ENSPPYT00000012293.2">
    <property type="protein sequence ID" value="ENSPPYP00000011837.2"/>
    <property type="gene ID" value="ENSPPYG00000010571.2"/>
</dbReference>
<dbReference type="GeneID" id="100171677"/>
<dbReference type="KEGG" id="pon:100171677"/>
<dbReference type="CTD" id="610870"/>
<dbReference type="eggNOG" id="ENOG502S8BT">
    <property type="taxonomic scope" value="Eukaryota"/>
</dbReference>
<dbReference type="GeneTree" id="ENSGT00390000011740"/>
<dbReference type="HOGENOM" id="CLU_3111692_0_0_1"/>
<dbReference type="InParanoid" id="Q5REM2"/>
<dbReference type="OMA" id="IEHETAM"/>
<dbReference type="OrthoDB" id="5239630at2759"/>
<dbReference type="Proteomes" id="UP000001595">
    <property type="component" value="Chromosome 19"/>
</dbReference>
<dbReference type="InterPro" id="IPR019034">
    <property type="entry name" value="UPF0390"/>
</dbReference>
<dbReference type="PANTHER" id="PTHR16967">
    <property type="entry name" value="LEYDIG CELL TUMOR 10 KDA PROTEIN HOMOLOG"/>
    <property type="match status" value="1"/>
</dbReference>
<dbReference type="PANTHER" id="PTHR16967:SF1">
    <property type="entry name" value="LEYDIG CELL TUMOR 10 KDA PROTEIN HOMOLOG"/>
    <property type="match status" value="1"/>
</dbReference>
<dbReference type="Pfam" id="PF09495">
    <property type="entry name" value="DUF2462"/>
    <property type="match status" value="1"/>
</dbReference>
<comment type="function">
    <text evidence="1">May have a potential role in hypercalcemia of malignancy.</text>
</comment>
<comment type="similarity">
    <text evidence="3">Belongs to the UPF0390 family.</text>
</comment>
<feature type="chain" id="PRO_0000255272" description="Leydig cell tumor 10 kDa protein homolog">
    <location>
        <begin position="1"/>
        <end position="99"/>
    </location>
</feature>
<feature type="region of interest" description="Disordered" evidence="2">
    <location>
        <begin position="1"/>
        <end position="37"/>
    </location>
</feature>
<feature type="compositionally biased region" description="Basic residues" evidence="2">
    <location>
        <begin position="28"/>
        <end position="37"/>
    </location>
</feature>